<dbReference type="EMBL" id="AF293340">
    <property type="protein sequence ID" value="AAK35008.1"/>
    <property type="molecule type" value="mRNA"/>
</dbReference>
<dbReference type="EMBL" id="AF293341">
    <property type="protein sequence ID" value="AAK35009.1"/>
    <property type="molecule type" value="mRNA"/>
</dbReference>
<dbReference type="EMBL" id="AC097473">
    <property type="status" value="NOT_ANNOTATED_CDS"/>
    <property type="molecule type" value="Genomic_DNA"/>
</dbReference>
<dbReference type="EMBL" id="AC073427">
    <property type="status" value="NOT_ANNOTATED_CDS"/>
    <property type="molecule type" value="Genomic_DNA"/>
</dbReference>
<dbReference type="EMBL" id="AC095066">
    <property type="status" value="NOT_ANNOTATED_CDS"/>
    <property type="molecule type" value="Genomic_DNA"/>
</dbReference>
<dbReference type="EMBL" id="AC004701">
    <property type="status" value="NOT_ANNOTATED_CDS"/>
    <property type="molecule type" value="Genomic_DNA"/>
</dbReference>
<dbReference type="EMBL" id="AC004051">
    <property type="status" value="NOT_ANNOTATED_CDS"/>
    <property type="molecule type" value="Genomic_DNA"/>
</dbReference>
<dbReference type="CCDS" id="CCDS43258.1">
    <molecule id="Q9BXS0-1"/>
</dbReference>
<dbReference type="CCDS" id="CCDS43259.1">
    <molecule id="Q9BXS0-2"/>
</dbReference>
<dbReference type="RefSeq" id="NP_115907.2">
    <molecule id="Q9BXS0-2"/>
    <property type="nucleotide sequence ID" value="NM_032518.2"/>
</dbReference>
<dbReference type="RefSeq" id="NP_942014.1">
    <molecule id="Q9BXS0-1"/>
    <property type="nucleotide sequence ID" value="NM_198721.4"/>
</dbReference>
<dbReference type="BioGRID" id="124143">
    <property type="interactions" value="7"/>
</dbReference>
<dbReference type="ComplexPortal" id="CPX-1766">
    <molecule id="Q9BXS0-1"/>
    <property type="entry name" value="Collagen type XXV trimer, variant 1"/>
</dbReference>
<dbReference type="ComplexPortal" id="CPX-390">
    <molecule id="Q9BXS0-2"/>
    <property type="entry name" value="Collagen type XXV trimer, variant 2"/>
</dbReference>
<dbReference type="ComplexPortal" id="CPX-391">
    <molecule id="Q9BXS0-3"/>
    <property type="entry name" value="Collagen type XXV trimer, variant 3"/>
</dbReference>
<dbReference type="FunCoup" id="Q9BXS0">
    <property type="interactions" value="173"/>
</dbReference>
<dbReference type="IntAct" id="Q9BXS0">
    <property type="interactions" value="1"/>
</dbReference>
<dbReference type="STRING" id="9606.ENSP00000382083"/>
<dbReference type="GlyGen" id="Q9BXS0">
    <property type="glycosylation" value="2 sites, 1 O-linked glycan (1 site)"/>
</dbReference>
<dbReference type="iPTMnet" id="Q9BXS0"/>
<dbReference type="PhosphoSitePlus" id="Q9BXS0"/>
<dbReference type="BioMuta" id="COL25A1"/>
<dbReference type="DMDM" id="296434459"/>
<dbReference type="MassIVE" id="Q9BXS0"/>
<dbReference type="PaxDb" id="9606-ENSP00000382083"/>
<dbReference type="PeptideAtlas" id="Q9BXS0"/>
<dbReference type="ProteomicsDB" id="79487">
    <molecule id="Q9BXS0-1"/>
</dbReference>
<dbReference type="ProteomicsDB" id="79488">
    <molecule id="Q9BXS0-2"/>
</dbReference>
<dbReference type="ProteomicsDB" id="79489">
    <molecule id="Q9BXS0-3"/>
</dbReference>
<dbReference type="Pumba" id="Q9BXS0"/>
<dbReference type="Antibodypedia" id="7049">
    <property type="antibodies" value="175 antibodies from 26 providers"/>
</dbReference>
<dbReference type="DNASU" id="84570"/>
<dbReference type="Ensembl" id="ENST00000399126.1">
    <molecule id="Q9BXS0-2"/>
    <property type="protein sequence ID" value="ENSP00000382077.1"/>
    <property type="gene ID" value="ENSG00000188517.17"/>
</dbReference>
<dbReference type="Ensembl" id="ENST00000399132.6">
    <molecule id="Q9BXS0-1"/>
    <property type="protein sequence ID" value="ENSP00000382083.1"/>
    <property type="gene ID" value="ENSG00000188517.17"/>
</dbReference>
<dbReference type="GeneID" id="84570"/>
<dbReference type="KEGG" id="hsa:84570"/>
<dbReference type="MANE-Select" id="ENST00000399132.6">
    <property type="protein sequence ID" value="ENSP00000382083.1"/>
    <property type="RefSeq nucleotide sequence ID" value="NM_198721.4"/>
    <property type="RefSeq protein sequence ID" value="NP_942014.1"/>
</dbReference>
<dbReference type="UCSC" id="uc062yyf.1">
    <molecule id="Q9BXS0-1"/>
    <property type="organism name" value="human"/>
</dbReference>
<dbReference type="AGR" id="HGNC:18603"/>
<dbReference type="CTD" id="84570"/>
<dbReference type="DisGeNET" id="84570"/>
<dbReference type="GeneCards" id="COL25A1"/>
<dbReference type="HGNC" id="HGNC:18603">
    <property type="gene designation" value="COL25A1"/>
</dbReference>
<dbReference type="HPA" id="ENSG00000188517">
    <property type="expression patterns" value="Tissue enhanced (retina, testis)"/>
</dbReference>
<dbReference type="MalaCards" id="COL25A1"/>
<dbReference type="MIM" id="610004">
    <property type="type" value="gene"/>
</dbReference>
<dbReference type="MIM" id="616219">
    <property type="type" value="phenotype"/>
</dbReference>
<dbReference type="neXtProt" id="NX_Q9BXS0"/>
<dbReference type="OpenTargets" id="ENSG00000188517"/>
<dbReference type="Orphanet" id="45358">
    <property type="disease" value="Congenital fibrosis of extraocular muscles"/>
</dbReference>
<dbReference type="Orphanet" id="91411">
    <property type="disease" value="Congenital ptosis"/>
</dbReference>
<dbReference type="Orphanet" id="1143">
    <property type="disease" value="Neurogenic arthrogryposis multiplex congenita"/>
</dbReference>
<dbReference type="PharmGKB" id="PA134912284"/>
<dbReference type="VEuPathDB" id="HostDB:ENSG00000188517"/>
<dbReference type="eggNOG" id="KOG3544">
    <property type="taxonomic scope" value="Eukaryota"/>
</dbReference>
<dbReference type="GeneTree" id="ENSGT00940000159823"/>
<dbReference type="InParanoid" id="Q9BXS0"/>
<dbReference type="OrthoDB" id="6380629at2759"/>
<dbReference type="PAN-GO" id="Q9BXS0">
    <property type="GO annotations" value="2 GO annotations based on evolutionary models"/>
</dbReference>
<dbReference type="PhylomeDB" id="Q9BXS0"/>
<dbReference type="TreeFam" id="TF338175"/>
<dbReference type="PathwayCommons" id="Q9BXS0"/>
<dbReference type="Reactome" id="R-HSA-1442490">
    <property type="pathway name" value="Collagen degradation"/>
</dbReference>
<dbReference type="Reactome" id="R-HSA-1650814">
    <property type="pathway name" value="Collagen biosynthesis and modifying enzymes"/>
</dbReference>
<dbReference type="Reactome" id="R-HSA-8948216">
    <property type="pathway name" value="Collagen chain trimerization"/>
</dbReference>
<dbReference type="SignaLink" id="Q9BXS0"/>
<dbReference type="BioGRID-ORCS" id="84570">
    <property type="hits" value="14 hits in 1146 CRISPR screens"/>
</dbReference>
<dbReference type="ChiTaRS" id="COL25A1">
    <property type="organism name" value="human"/>
</dbReference>
<dbReference type="GeneWiki" id="Collagen,_type_XXV,_alpha_1"/>
<dbReference type="GenomeRNAi" id="84570"/>
<dbReference type="Pharos" id="Q9BXS0">
    <property type="development level" value="Tbio"/>
</dbReference>
<dbReference type="PRO" id="PR:Q9BXS0"/>
<dbReference type="Proteomes" id="UP000005640">
    <property type="component" value="Chromosome 4"/>
</dbReference>
<dbReference type="RNAct" id="Q9BXS0">
    <property type="molecule type" value="protein"/>
</dbReference>
<dbReference type="Bgee" id="ENSG00000188517">
    <property type="expression patterns" value="Expressed in sperm and 104 other cell types or tissues"/>
</dbReference>
<dbReference type="ExpressionAtlas" id="Q9BXS0">
    <property type="expression patterns" value="baseline and differential"/>
</dbReference>
<dbReference type="GO" id="GO:0005581">
    <property type="term" value="C:collagen trimer"/>
    <property type="evidence" value="ECO:0007669"/>
    <property type="project" value="UniProtKB-KW"/>
</dbReference>
<dbReference type="GO" id="GO:0062023">
    <property type="term" value="C:collagen-containing extracellular matrix"/>
    <property type="evidence" value="ECO:0007005"/>
    <property type="project" value="BHF-UCL"/>
</dbReference>
<dbReference type="GO" id="GO:0005788">
    <property type="term" value="C:endoplasmic reticulum lumen"/>
    <property type="evidence" value="ECO:0000304"/>
    <property type="project" value="Reactome"/>
</dbReference>
<dbReference type="GO" id="GO:0005576">
    <property type="term" value="C:extracellular region"/>
    <property type="evidence" value="ECO:0000314"/>
    <property type="project" value="MGI"/>
</dbReference>
<dbReference type="GO" id="GO:0005615">
    <property type="term" value="C:extracellular space"/>
    <property type="evidence" value="ECO:0000314"/>
    <property type="project" value="UniProtKB"/>
</dbReference>
<dbReference type="GO" id="GO:0016020">
    <property type="term" value="C:membrane"/>
    <property type="evidence" value="ECO:0000303"/>
    <property type="project" value="UniProtKB"/>
</dbReference>
<dbReference type="GO" id="GO:0005886">
    <property type="term" value="C:plasma membrane"/>
    <property type="evidence" value="ECO:0000314"/>
    <property type="project" value="MGI"/>
</dbReference>
<dbReference type="GO" id="GO:0001540">
    <property type="term" value="F:amyloid-beta binding"/>
    <property type="evidence" value="ECO:0000314"/>
    <property type="project" value="UniProtKB"/>
</dbReference>
<dbReference type="GO" id="GO:0008201">
    <property type="term" value="F:heparin binding"/>
    <property type="evidence" value="ECO:0000314"/>
    <property type="project" value="UniProtKB"/>
</dbReference>
<dbReference type="GO" id="GO:0042802">
    <property type="term" value="F:identical protein binding"/>
    <property type="evidence" value="ECO:0000353"/>
    <property type="project" value="IntAct"/>
</dbReference>
<dbReference type="GO" id="GO:0060385">
    <property type="term" value="P:axonogenesis involved in innervation"/>
    <property type="evidence" value="ECO:0007669"/>
    <property type="project" value="Ensembl"/>
</dbReference>
<dbReference type="InterPro" id="IPR008160">
    <property type="entry name" value="Collagen"/>
</dbReference>
<dbReference type="InterPro" id="IPR050938">
    <property type="entry name" value="Collagen_Structural_Proteins"/>
</dbReference>
<dbReference type="PANTHER" id="PTHR37456:SF3">
    <property type="entry name" value="COLLAGEN ALPHA-1(XXV) CHAIN"/>
    <property type="match status" value="1"/>
</dbReference>
<dbReference type="PANTHER" id="PTHR37456">
    <property type="entry name" value="SI:CH211-266K2.1"/>
    <property type="match status" value="1"/>
</dbReference>
<dbReference type="Pfam" id="PF01391">
    <property type="entry name" value="Collagen"/>
    <property type="match status" value="7"/>
</dbReference>
<accession>Q9BXS0</accession>
<accession>A8MPZ6</accession>
<accession>Q9BXR9</accession>
<evidence type="ECO:0000255" key="1"/>
<evidence type="ECO:0000256" key="2">
    <source>
        <dbReference type="SAM" id="MobiDB-lite"/>
    </source>
</evidence>
<evidence type="ECO:0000269" key="3">
    <source>
    </source>
</evidence>
<evidence type="ECO:0000269" key="4">
    <source>
    </source>
</evidence>
<evidence type="ECO:0000269" key="5">
    <source>
    </source>
</evidence>
<evidence type="ECO:0000269" key="6">
    <source>
    </source>
</evidence>
<evidence type="ECO:0000269" key="7">
    <source>
    </source>
</evidence>
<evidence type="ECO:0000269" key="8">
    <source>
    </source>
</evidence>
<evidence type="ECO:0000269" key="9">
    <source>
    </source>
</evidence>
<evidence type="ECO:0000269" key="10">
    <source>
    </source>
</evidence>
<evidence type="ECO:0000303" key="11">
    <source>
    </source>
</evidence>
<evidence type="ECO:0000303" key="12">
    <source>
    </source>
</evidence>
<evidence type="ECO:0000305" key="13"/>
<evidence type="ECO:0000312" key="14">
    <source>
        <dbReference type="EMBL" id="AAK35008.1"/>
    </source>
</evidence>
<evidence type="ECO:0000312" key="15">
    <source>
        <dbReference type="HGNC" id="HGNC:18603"/>
    </source>
</evidence>
<keyword id="KW-0025">Alternative splicing</keyword>
<keyword id="KW-0034">Amyloid</keyword>
<keyword id="KW-0176">Collagen</keyword>
<keyword id="KW-0903">Direct protein sequencing</keyword>
<keyword id="KW-0225">Disease variant</keyword>
<keyword id="KW-0325">Glycoprotein</keyword>
<keyword id="KW-0358">Heparin-binding</keyword>
<keyword id="KW-0379">Hydroxylation</keyword>
<keyword id="KW-0472">Membrane</keyword>
<keyword id="KW-1267">Proteomics identification</keyword>
<keyword id="KW-0873">Pyrrolidone carboxylic acid</keyword>
<keyword id="KW-1185">Reference proteome</keyword>
<keyword id="KW-0677">Repeat</keyword>
<keyword id="KW-0735">Signal-anchor</keyword>
<keyword id="KW-0812">Transmembrane</keyword>
<keyword id="KW-1133">Transmembrane helix</keyword>
<feature type="chain" id="PRO_0000259611" description="Collagen alpha-1(XXV) chain">
    <location>
        <begin position="1"/>
        <end position="654"/>
    </location>
</feature>
<feature type="chain" id="PRO_0000259612" description="Collagen-like Alzheimer amyloid plaque component" evidence="3 6">
    <location>
        <begin position="113"/>
        <end position="654"/>
    </location>
</feature>
<feature type="topological domain" description="Cytoplasmic" evidence="1">
    <location>
        <begin position="1"/>
        <end position="33"/>
    </location>
</feature>
<feature type="transmembrane region" description="Helical; Signal-anchor for type II membrane protein" evidence="1">
    <location>
        <begin position="34"/>
        <end position="54"/>
    </location>
</feature>
<feature type="topological domain" description="Extracellular" evidence="1">
    <location>
        <begin position="55"/>
        <end position="654"/>
    </location>
</feature>
<feature type="domain" description="Collagen-like 1" evidence="1">
    <location>
        <begin position="121"/>
        <end position="164"/>
    </location>
</feature>
<feature type="domain" description="Collagen-like 2" evidence="1">
    <location>
        <begin position="192"/>
        <end position="247"/>
    </location>
</feature>
<feature type="domain" description="Collagen-like 3" evidence="1">
    <location>
        <begin position="249"/>
        <end position="308"/>
    </location>
</feature>
<feature type="domain" description="Collagen-like 4" evidence="1">
    <location>
        <begin position="311"/>
        <end position="370"/>
    </location>
</feature>
<feature type="domain" description="Collagen-like 5" evidence="1">
    <location>
        <begin position="372"/>
        <end position="425"/>
    </location>
</feature>
<feature type="domain" description="Collagen-like 6" evidence="1">
    <location>
        <begin position="447"/>
        <end position="505"/>
    </location>
</feature>
<feature type="domain" description="Collagen-like 7" evidence="1">
    <location>
        <begin position="571"/>
        <end position="630"/>
    </location>
</feature>
<feature type="region of interest" description="Disordered" evidence="2">
    <location>
        <begin position="1"/>
        <end position="26"/>
    </location>
</feature>
<feature type="region of interest" description="Disordered" evidence="2">
    <location>
        <begin position="116"/>
        <end position="168"/>
    </location>
</feature>
<feature type="region of interest" description="Interaction with amyloid-beta peptide" evidence="6">
    <location>
        <begin position="181"/>
        <end position="188"/>
    </location>
</feature>
<feature type="region of interest" description="Disordered" evidence="2">
    <location>
        <begin position="189"/>
        <end position="426"/>
    </location>
</feature>
<feature type="region of interest" description="Disordered" evidence="2">
    <location>
        <begin position="445"/>
        <end position="654"/>
    </location>
</feature>
<feature type="compositionally biased region" description="Pro residues" evidence="2">
    <location>
        <begin position="140"/>
        <end position="151"/>
    </location>
</feature>
<feature type="compositionally biased region" description="Pro residues" evidence="2">
    <location>
        <begin position="196"/>
        <end position="208"/>
    </location>
</feature>
<feature type="compositionally biased region" description="Low complexity" evidence="2">
    <location>
        <begin position="230"/>
        <end position="245"/>
    </location>
</feature>
<feature type="compositionally biased region" description="Basic and acidic residues" evidence="2">
    <location>
        <begin position="280"/>
        <end position="290"/>
    </location>
</feature>
<feature type="compositionally biased region" description="Low complexity" evidence="2">
    <location>
        <begin position="336"/>
        <end position="358"/>
    </location>
</feature>
<feature type="compositionally biased region" description="Basic and acidic residues" evidence="2">
    <location>
        <begin position="361"/>
        <end position="377"/>
    </location>
</feature>
<feature type="compositionally biased region" description="Basic and acidic residues" evidence="2">
    <location>
        <begin position="398"/>
        <end position="407"/>
    </location>
</feature>
<feature type="compositionally biased region" description="Low complexity" evidence="2">
    <location>
        <begin position="457"/>
        <end position="466"/>
    </location>
</feature>
<feature type="compositionally biased region" description="Gly residues" evidence="2">
    <location>
        <begin position="494"/>
        <end position="503"/>
    </location>
</feature>
<feature type="compositionally biased region" description="Low complexity" evidence="2">
    <location>
        <begin position="517"/>
        <end position="527"/>
    </location>
</feature>
<feature type="compositionally biased region" description="Pro residues" evidence="2">
    <location>
        <begin position="528"/>
        <end position="543"/>
    </location>
</feature>
<feature type="compositionally biased region" description="Basic and acidic residues" evidence="2">
    <location>
        <begin position="603"/>
        <end position="626"/>
    </location>
</feature>
<feature type="site" description="Cleavage; by furin">
    <location>
        <begin position="112"/>
        <end position="113"/>
    </location>
</feature>
<feature type="modified residue" description="Pyrrolidone carboxylic acid (Glu)" evidence="3">
    <location>
        <position position="113"/>
    </location>
</feature>
<feature type="splice variant" id="VSP_052197" description="In isoform 3." evidence="12">
    <location>
        <begin position="141"/>
        <end position="146"/>
    </location>
</feature>
<feature type="splice variant" id="VSP_052198" description="In isoform 3." evidence="12">
    <location>
        <begin position="326"/>
        <end position="340"/>
    </location>
</feature>
<feature type="splice variant" id="VSP_052199" description="In isoform 3." evidence="12">
    <location>
        <begin position="589"/>
        <end position="640"/>
    </location>
</feature>
<feature type="splice variant" id="VSP_052200" description="In isoform 2." evidence="11">
    <original>GFRGVKGEKGEPGQPGLDGLDAPCQLGPDGLPMPGCWQK</original>
    <variation>VTSPSQHVPCLILLLLSALLFSLCDSI</variation>
    <location>
        <begin position="616"/>
        <end position="654"/>
    </location>
</feature>
<feature type="sequence variant" id="VAR_073325" description="In CFEOM5; causes loss of stability; causes incorrect folding; dbSNP:rs780209390." evidence="10">
    <original>G</original>
    <variation>R</variation>
    <location>
        <position position="382"/>
    </location>
</feature>
<feature type="mutagenesis site" description="Not secreted." evidence="3">
    <original>R</original>
    <variation>A</variation>
    <location>
        <position position="109"/>
    </location>
</feature>
<feature type="mutagenesis site" description="Not secreted." evidence="3">
    <original>R</original>
    <variation>A</variation>
    <location>
        <position position="112"/>
    </location>
</feature>
<feature type="mutagenesis site" description="Reduces binding to amyloid-beta peptide." evidence="6">
    <original>LIKRRLIK</original>
    <variation>VIKRRTFQ</variation>
    <location>
        <begin position="181"/>
        <end position="188"/>
    </location>
</feature>
<feature type="mutagenesis site" description="Abolishes binding to amyloid-beta peptide." evidence="6">
    <location>
        <begin position="181"/>
        <end position="188"/>
    </location>
</feature>
<feature type="sequence conflict" description="In Ref. 1; AAK35008 and 2; AAK35009." evidence="13" ref="1 2">
    <original>A</original>
    <variation>S</variation>
    <location>
        <position position="28"/>
    </location>
</feature>
<feature type="sequence conflict" description="In Ref. 1; AAK35008 and 2; AAK35009." evidence="13" ref="1 2">
    <original>E</original>
    <variation>K</variation>
    <location>
        <position position="427"/>
    </location>
</feature>
<proteinExistence type="evidence at protein level"/>
<gene>
    <name evidence="15" type="primary">COL25A1</name>
</gene>
<organism>
    <name type="scientific">Homo sapiens</name>
    <name type="common">Human</name>
    <dbReference type="NCBI Taxonomy" id="9606"/>
    <lineage>
        <taxon>Eukaryota</taxon>
        <taxon>Metazoa</taxon>
        <taxon>Chordata</taxon>
        <taxon>Craniata</taxon>
        <taxon>Vertebrata</taxon>
        <taxon>Euteleostomi</taxon>
        <taxon>Mammalia</taxon>
        <taxon>Eutheria</taxon>
        <taxon>Euarchontoglires</taxon>
        <taxon>Primates</taxon>
        <taxon>Haplorrhini</taxon>
        <taxon>Catarrhini</taxon>
        <taxon>Hominidae</taxon>
        <taxon>Homo</taxon>
    </lineage>
</organism>
<sequence length="654" mass="64771">MLLKKHAGKGGGREPRSEDPTPAEQHCARTMPPCAVLAALLSVVAVVSCLYLGVKTNDLQARIAALESAKGAPSIHLLPDTLDHLKTMVQEKVERLLAQKSYEHMAKIRIAREAPSECNCPAGPPGKRGKRGRRGESGPPGQPGPQGPPGPKGDKGEQGDQGPRMVFPKINHGFLSADQQLIKRRLIKGDQGQAGPPGPPGPPGPRGPPGDTGKDGPRGMPGVPGEPGKPGEQGLMGPLGPPGQKGSIGAPGIPGMNGQKGEPGLPGAVGQNGIPGPKGEPGEQGEKGDAGENGPKGDTGEKGDPGSSAAGIKGEPGESGRPGQKGEPGLPGLPGLPGIKGEPGFIGPQGEPGLPGLPGTKGERGEAGPPGRGERGEPGAPGPKGKQGESGTRGPKGSKGDRGEKGDSGAQGPRGPPGQKGDQGATEIIDYNGNLHEALQRITTLTVTGPPGPPGPQGLQGPKGEQGSPGIPGMDGEQGLKGSKGDMGDPGMTGEKGGIGLPGLPGANGMKGEKGDSGMPGPQGPSIIGPPGPPGPHGPPGPMGPHGLPGPKGTDGPMGPHGPAGPKGERGEKGAMGEPGPRGPYGLPGKDGEPGLDGFPGPRGEKGDLGEKGEKGFRGVKGEKGEPGQPGLDGLDAPCQLGPDGLPMPGCWQK</sequence>
<protein>
    <recommendedName>
        <fullName>Collagen alpha-1(XXV) chain</fullName>
    </recommendedName>
    <alternativeName>
        <fullName>Alzheimer disease amyloid-associated protein</fullName>
        <shortName>AMY</shortName>
    </alternativeName>
    <alternativeName>
        <fullName>CLAC-P</fullName>
    </alternativeName>
    <component>
        <recommendedName>
            <fullName>Collagen-like Alzheimer amyloid plaque component</fullName>
            <shortName>CLAC</shortName>
        </recommendedName>
    </component>
</protein>
<comment type="function">
    <text evidence="6 7 8 9">Inhibits fibrillization of amyloid-beta peptide during the elongation phase. Has also been shown to assemble amyloid fibrils into protease-resistant aggregates. Binds heparin.</text>
</comment>
<comment type="subunit">
    <text evidence="3 5 6 7">Forms homodimers and homotrimers. Binds to the fibrillized forms of amyloid-beta protein 40 (beta-APP40) and amyloid-beta protein 42 (beta-APP42). Found associated with beta-APP42 more frequently than with beta-APP40.</text>
</comment>
<comment type="interaction">
    <interactant intactId="EBI-11682418">
        <id>Q9BXS0-3</id>
    </interactant>
    <interactant intactId="EBI-11682418">
        <id>Q9BXS0-3</id>
        <label>COL25A1</label>
    </interactant>
    <organismsDiffer>false</organismsDiffer>
    <experiments>4</experiments>
</comment>
<comment type="subcellular location">
    <subcellularLocation>
        <location evidence="13">Membrane</location>
        <topology evidence="13">Single-pass type II membrane protein</topology>
    </subcellularLocation>
    <text>After proteolytic cleavage, CLAC is secreted.</text>
</comment>
<comment type="alternative products">
    <event type="alternative splicing"/>
    <isoform>
        <id>Q9BXS0-1</id>
        <name evidence="3">1</name>
        <sequence type="displayed"/>
    </isoform>
    <isoform>
        <id>Q9BXS0-2</id>
        <name evidence="3">2</name>
        <sequence type="described" ref="VSP_052200"/>
    </isoform>
    <isoform>
        <id>Q9BXS0-3</id>
        <name evidence="4">3</name>
        <sequence type="described" ref="VSP_052197 VSP_052198 VSP_052199"/>
    </isoform>
</comment>
<comment type="tissue specificity">
    <text evidence="3">Expressed predominantly in brain. Deposited preferentially in primitive or neuritic amyloid plaques which are typical of Alzheimer disease.</text>
</comment>
<comment type="PTM">
    <text evidence="3">Undergoes proteolytic cleavage by furin protease to yield the soluble collagen-like Alzheimer amyloid plaque component.</text>
</comment>
<comment type="PTM">
    <text evidence="6">Glycosylated.</text>
</comment>
<comment type="PTM">
    <text evidence="3 6">Hydroxylated on 11% of proline residues and 49% of lysine residues.</text>
</comment>
<comment type="disease" evidence="10">
    <disease id="DI-04337">
        <name>Fibrosis of extraocular muscles, congenital, 5</name>
        <acronym>CFEOM5</acronym>
        <description>An ocular motility disorder characterized by congenital dysinnervation of various cranial nerves to ocular muscles. Clinical features are ophthalmoplegia, anchoring of the eyes in downward gaze, ptosis, and backward tilt of the head.</description>
        <dbReference type="MIM" id="616219"/>
    </disease>
    <text>The disease is caused by variants affecting the gene represented in this entry.</text>
</comment>
<comment type="caution">
    <text evidence="13">The pyrrolidone carboxylic acid reported in PubMed:11927537 probably formed artifactually from Glu-113 during the extraction procedure in 70% formic acid. In PubMed:15522881, the protein was found to have unblocked Glu at the N-terminus.</text>
</comment>
<name>COPA1_HUMAN</name>
<reference evidence="13 14" key="1">
    <citation type="journal article" date="2002" name="EMBO J.">
        <title>CLAC: a novel Alzheimer amyloid plaque component derived from a transmembrane precursor, CLAC-P/collagen type XXV.</title>
        <authorList>
            <person name="Hashimoto T."/>
            <person name="Wakabayashi T."/>
            <person name="Watanabe A."/>
            <person name="Kowa H."/>
            <person name="Hosoda R."/>
            <person name="Nakamura A."/>
            <person name="Kanazawa I."/>
            <person name="Arai T."/>
            <person name="Takio K."/>
            <person name="Mann D.M.A."/>
            <person name="Iwatsubo T."/>
        </authorList>
    </citation>
    <scope>NUCLEOTIDE SEQUENCE [MRNA] (ISOFORMS 1 AND 2)</scope>
    <scope>PROTEIN SEQUENCE OF 131-152 AND 156-214</scope>
    <scope>INTERACTION WITH AMYLOID-BETA PEPTIDE</scope>
    <scope>TISSUE SPECIFICITY</scope>
    <scope>CLEAVAGE</scope>
    <scope>HYDROXYLATION</scope>
    <scope>PYROGLUTAMATE FORMATION AT GLU-113</scope>
    <scope>MUTAGENESIS OF ARG-109 AND ARG-112</scope>
</reference>
<reference evidence="13" key="2">
    <citation type="journal article" date="2003" name="J. Neuropathol. Exp. Neurol.">
        <title>Molecular identification of AMY, an Alzheimer disease amyloid-associated protein.</title>
        <authorList>
            <person name="Soederberg L."/>
            <person name="Zhukareva V."/>
            <person name="Bogdanovic N."/>
            <person name="Hashimoto T."/>
            <person name="Winblad B."/>
            <person name="Iwatsubo T."/>
            <person name="Lee V.M.Y."/>
            <person name="Trojanowski J.Q."/>
            <person name="Naeslund J."/>
        </authorList>
    </citation>
    <scope>NUCLEOTIDE SEQUENCE [MRNA] (ISOFORM 3)</scope>
</reference>
<reference key="3">
    <citation type="journal article" date="2005" name="Nature">
        <title>Generation and annotation of the DNA sequences of human chromosomes 2 and 4.</title>
        <authorList>
            <person name="Hillier L.W."/>
            <person name="Graves T.A."/>
            <person name="Fulton R.S."/>
            <person name="Fulton L.A."/>
            <person name="Pepin K.H."/>
            <person name="Minx P."/>
            <person name="Wagner-McPherson C."/>
            <person name="Layman D."/>
            <person name="Wylie K."/>
            <person name="Sekhon M."/>
            <person name="Becker M.C."/>
            <person name="Fewell G.A."/>
            <person name="Delehaunty K.D."/>
            <person name="Miner T.L."/>
            <person name="Nash W.E."/>
            <person name="Kremitzki C."/>
            <person name="Oddy L."/>
            <person name="Du H."/>
            <person name="Sun H."/>
            <person name="Bradshaw-Cordum H."/>
            <person name="Ali J."/>
            <person name="Carter J."/>
            <person name="Cordes M."/>
            <person name="Harris A."/>
            <person name="Isak A."/>
            <person name="van Brunt A."/>
            <person name="Nguyen C."/>
            <person name="Du F."/>
            <person name="Courtney L."/>
            <person name="Kalicki J."/>
            <person name="Ozersky P."/>
            <person name="Abbott S."/>
            <person name="Armstrong J."/>
            <person name="Belter E.A."/>
            <person name="Caruso L."/>
            <person name="Cedroni M."/>
            <person name="Cotton M."/>
            <person name="Davidson T."/>
            <person name="Desai A."/>
            <person name="Elliott G."/>
            <person name="Erb T."/>
            <person name="Fronick C."/>
            <person name="Gaige T."/>
            <person name="Haakenson W."/>
            <person name="Haglund K."/>
            <person name="Holmes A."/>
            <person name="Harkins R."/>
            <person name="Kim K."/>
            <person name="Kruchowski S.S."/>
            <person name="Strong C.M."/>
            <person name="Grewal N."/>
            <person name="Goyea E."/>
            <person name="Hou S."/>
            <person name="Levy A."/>
            <person name="Martinka S."/>
            <person name="Mead K."/>
            <person name="McLellan M.D."/>
            <person name="Meyer R."/>
            <person name="Randall-Maher J."/>
            <person name="Tomlinson C."/>
            <person name="Dauphin-Kohlberg S."/>
            <person name="Kozlowicz-Reilly A."/>
            <person name="Shah N."/>
            <person name="Swearengen-Shahid S."/>
            <person name="Snider J."/>
            <person name="Strong J.T."/>
            <person name="Thompson J."/>
            <person name="Yoakum M."/>
            <person name="Leonard S."/>
            <person name="Pearman C."/>
            <person name="Trani L."/>
            <person name="Radionenko M."/>
            <person name="Waligorski J.E."/>
            <person name="Wang C."/>
            <person name="Rock S.M."/>
            <person name="Tin-Wollam A.-M."/>
            <person name="Maupin R."/>
            <person name="Latreille P."/>
            <person name="Wendl M.C."/>
            <person name="Yang S.-P."/>
            <person name="Pohl C."/>
            <person name="Wallis J.W."/>
            <person name="Spieth J."/>
            <person name="Bieri T.A."/>
            <person name="Berkowicz N."/>
            <person name="Nelson J.O."/>
            <person name="Osborne J."/>
            <person name="Ding L."/>
            <person name="Meyer R."/>
            <person name="Sabo A."/>
            <person name="Shotland Y."/>
            <person name="Sinha P."/>
            <person name="Wohldmann P.E."/>
            <person name="Cook L.L."/>
            <person name="Hickenbotham M.T."/>
            <person name="Eldred J."/>
            <person name="Williams D."/>
            <person name="Jones T.A."/>
            <person name="She X."/>
            <person name="Ciccarelli F.D."/>
            <person name="Izaurralde E."/>
            <person name="Taylor J."/>
            <person name="Schmutz J."/>
            <person name="Myers R.M."/>
            <person name="Cox D.R."/>
            <person name="Huang X."/>
            <person name="McPherson J.D."/>
            <person name="Mardis E.R."/>
            <person name="Clifton S.W."/>
            <person name="Warren W.C."/>
            <person name="Chinwalla A.T."/>
            <person name="Eddy S.R."/>
            <person name="Marra M.A."/>
            <person name="Ovcharenko I."/>
            <person name="Furey T.S."/>
            <person name="Miller W."/>
            <person name="Eichler E.E."/>
            <person name="Bork P."/>
            <person name="Suyama M."/>
            <person name="Torrents D."/>
            <person name="Waterston R.H."/>
            <person name="Wilson R.K."/>
        </authorList>
    </citation>
    <scope>NUCLEOTIDE SEQUENCE [LARGE SCALE GENOMIC DNA]</scope>
</reference>
<reference evidence="13" key="4">
    <citation type="journal article" date="2005" name="J. Biol. Chem.">
        <title>Characterization of the Alzheimer's disease-associated CLAC protein and identification of an amyloid beta-peptide-binding site.</title>
        <authorList>
            <person name="Soederberg L."/>
            <person name="Kakuyama H."/>
            <person name="Moeller A."/>
            <person name="Ito A."/>
            <person name="Winblad B."/>
            <person name="Tjernberg L.O."/>
            <person name="Naeslund J."/>
        </authorList>
    </citation>
    <scope>PROTEIN SEQUENCE OF CLAC N-TERMINUS</scope>
    <scope>PROTEIN SEQUENCE OF 182-191 AND 445-452</scope>
    <scope>FUNCTION</scope>
    <scope>SUBUNIT</scope>
    <scope>INTERACTION WITH AMYLOID-BETA PEPTIDE</scope>
    <scope>GLYCOSYLATION</scope>
    <scope>HYDROXYLATION</scope>
    <scope>MUTAGENESIS OF 181-LEU--LYS-188</scope>
</reference>
<reference evidence="13" key="5">
    <citation type="journal article" date="2004" name="Am. J. Pathol.">
        <title>Mostly separate distributions of CLAC- versus Abeta40- or thioflavin S-reactivities in senile plaques reveal two distinct subpopulations of beta-amyloid deposits.</title>
        <authorList>
            <person name="Kowa H."/>
            <person name="Sakakura T."/>
            <person name="Matsuura Y."/>
            <person name="Wakabayashi T."/>
            <person name="Mann D.M.A."/>
            <person name="Duff K."/>
            <person name="Tsuji S."/>
            <person name="Hashimoto T."/>
            <person name="Iwatsubo T."/>
        </authorList>
    </citation>
    <scope>INTERACTION WITH AMYLOID-BETA PEPTIDE</scope>
</reference>
<reference evidence="13" key="6">
    <citation type="journal article" date="2005" name="Biochemistry">
        <title>CLAC binds to aggregated Abeta and Abeta fragments, and attenuates fibril elongation.</title>
        <authorList>
            <person name="Kakuyama H."/>
            <person name="Soederberg L."/>
            <person name="Horigome K."/>
            <person name="Winblad B."/>
            <person name="Dahlqvist C."/>
            <person name="Naeslund J."/>
            <person name="Tjernberg L.O."/>
        </authorList>
    </citation>
    <scope>FUNCTION</scope>
</reference>
<reference evidence="13" key="7">
    <citation type="journal article" date="2005" name="FEBS J.">
        <title>Collagenous Alzheimer amyloid plaque component assembles amyloid fibrils into protease resistant aggregates.</title>
        <authorList>
            <person name="Soederberg L."/>
            <person name="Dahlqvist C."/>
            <person name="Kakuyama H."/>
            <person name="Thyberg J."/>
            <person name="Ito A."/>
            <person name="Winblad B."/>
            <person name="Naeslund J."/>
            <person name="Tjernberg L.O."/>
        </authorList>
    </citation>
    <scope>FUNCTION</scope>
</reference>
<reference evidence="13" key="8">
    <citation type="journal article" date="2005" name="J. Biol. Chem.">
        <title>CLAC binds to amyloid beta peptides through the positively charged amino acid cluster within the collagenous domain 1 and inhibits formation of amyloid fibrils.</title>
        <authorList>
            <person name="Osada Y."/>
            <person name="Hashimoto T."/>
            <person name="Nishimura A."/>
            <person name="Matsuo Y."/>
            <person name="Wakabayashi T."/>
            <person name="Iwatsubo T."/>
        </authorList>
    </citation>
    <scope>FUNCTION</scope>
    <scope>INTERACTION WITH AMYLOID-BETA PEPTIDE</scope>
</reference>
<reference key="9">
    <citation type="journal article" date="2005" name="J. Biol. Chem.">
        <authorList>
            <person name="Osada Y."/>
            <person name="Hashimoto T."/>
            <person name="Nishimura A."/>
            <person name="Matsuo Y."/>
            <person name="Wakabayashi T."/>
            <person name="Iwatsubo T."/>
        </authorList>
    </citation>
    <scope>ERRATUM OF PUBMED:15615705</scope>
</reference>
<reference key="10">
    <citation type="journal article" date="2015" name="Am. J. Hum. Genet.">
        <title>Recessive mutations in COL25A1 are a cause of congenital cranial dysinnervation disorder.</title>
        <authorList>
            <person name="Shinwari J.M."/>
            <person name="Khan A."/>
            <person name="Awad S."/>
            <person name="Shinwari Z."/>
            <person name="Alaiya A."/>
            <person name="Alanazi M."/>
            <person name="Tahir A."/>
            <person name="Poizat C."/>
            <person name="Al Tassan N."/>
        </authorList>
    </citation>
    <scope>INVOLVEMENT IN CFEOM5</scope>
    <scope>VARIANT CFEOM5 ARG-382</scope>
    <scope>CHARACTERIZATION OF VARIANT CFEOM5 ARG-382</scope>
</reference>